<sequence>MARIAGVNIPVHKHTVIGLTSIYGIGKTRAQQICQTCNVDPTVKIKDLSEEQVESLRTEVAKFTVEGDLRREVSMDIKRLMDLGCFRGRRHRRSLPVRGQRTKTNARTRKGPRKPIKA</sequence>
<dbReference type="EMBL" id="CP000915">
    <property type="protein sequence ID" value="ACD31327.1"/>
    <property type="molecule type" value="Genomic_DNA"/>
</dbReference>
<dbReference type="SMR" id="B2SDW3"/>
<dbReference type="KEGG" id="ftm:FTM_1505"/>
<dbReference type="HOGENOM" id="CLU_103849_1_2_6"/>
<dbReference type="GO" id="GO:0005829">
    <property type="term" value="C:cytosol"/>
    <property type="evidence" value="ECO:0007669"/>
    <property type="project" value="TreeGrafter"/>
</dbReference>
<dbReference type="GO" id="GO:0015935">
    <property type="term" value="C:small ribosomal subunit"/>
    <property type="evidence" value="ECO:0007669"/>
    <property type="project" value="TreeGrafter"/>
</dbReference>
<dbReference type="GO" id="GO:0019843">
    <property type="term" value="F:rRNA binding"/>
    <property type="evidence" value="ECO:0007669"/>
    <property type="project" value="UniProtKB-UniRule"/>
</dbReference>
<dbReference type="GO" id="GO:0003735">
    <property type="term" value="F:structural constituent of ribosome"/>
    <property type="evidence" value="ECO:0007669"/>
    <property type="project" value="InterPro"/>
</dbReference>
<dbReference type="GO" id="GO:0000049">
    <property type="term" value="F:tRNA binding"/>
    <property type="evidence" value="ECO:0007669"/>
    <property type="project" value="UniProtKB-UniRule"/>
</dbReference>
<dbReference type="GO" id="GO:0006412">
    <property type="term" value="P:translation"/>
    <property type="evidence" value="ECO:0007669"/>
    <property type="project" value="UniProtKB-UniRule"/>
</dbReference>
<dbReference type="FunFam" id="1.10.8.50:FF:000001">
    <property type="entry name" value="30S ribosomal protein S13"/>
    <property type="match status" value="1"/>
</dbReference>
<dbReference type="FunFam" id="4.10.910.10:FF:000001">
    <property type="entry name" value="30S ribosomal protein S13"/>
    <property type="match status" value="1"/>
</dbReference>
<dbReference type="Gene3D" id="1.10.8.50">
    <property type="match status" value="1"/>
</dbReference>
<dbReference type="Gene3D" id="4.10.910.10">
    <property type="entry name" value="30s ribosomal protein s13, domain 2"/>
    <property type="match status" value="1"/>
</dbReference>
<dbReference type="HAMAP" id="MF_01315">
    <property type="entry name" value="Ribosomal_uS13"/>
    <property type="match status" value="1"/>
</dbReference>
<dbReference type="InterPro" id="IPR027437">
    <property type="entry name" value="Rbsml_uS13_C"/>
</dbReference>
<dbReference type="InterPro" id="IPR001892">
    <property type="entry name" value="Ribosomal_uS13"/>
</dbReference>
<dbReference type="InterPro" id="IPR010979">
    <property type="entry name" value="Ribosomal_uS13-like_H2TH"/>
</dbReference>
<dbReference type="InterPro" id="IPR019980">
    <property type="entry name" value="Ribosomal_uS13_bac-type"/>
</dbReference>
<dbReference type="InterPro" id="IPR018269">
    <property type="entry name" value="Ribosomal_uS13_CS"/>
</dbReference>
<dbReference type="NCBIfam" id="TIGR03631">
    <property type="entry name" value="uS13_bact"/>
    <property type="match status" value="1"/>
</dbReference>
<dbReference type="PANTHER" id="PTHR10871">
    <property type="entry name" value="30S RIBOSOMAL PROTEIN S13/40S RIBOSOMAL PROTEIN S18"/>
    <property type="match status" value="1"/>
</dbReference>
<dbReference type="PANTHER" id="PTHR10871:SF1">
    <property type="entry name" value="SMALL RIBOSOMAL SUBUNIT PROTEIN US13M"/>
    <property type="match status" value="1"/>
</dbReference>
<dbReference type="Pfam" id="PF00416">
    <property type="entry name" value="Ribosomal_S13"/>
    <property type="match status" value="1"/>
</dbReference>
<dbReference type="PIRSF" id="PIRSF002134">
    <property type="entry name" value="Ribosomal_S13"/>
    <property type="match status" value="1"/>
</dbReference>
<dbReference type="SUPFAM" id="SSF46946">
    <property type="entry name" value="S13-like H2TH domain"/>
    <property type="match status" value="1"/>
</dbReference>
<dbReference type="PROSITE" id="PS00646">
    <property type="entry name" value="RIBOSOMAL_S13_1"/>
    <property type="match status" value="1"/>
</dbReference>
<dbReference type="PROSITE" id="PS50159">
    <property type="entry name" value="RIBOSOMAL_S13_2"/>
    <property type="match status" value="1"/>
</dbReference>
<comment type="function">
    <text evidence="1">Located at the top of the head of the 30S subunit, it contacts several helices of the 16S rRNA. In the 70S ribosome it contacts the 23S rRNA (bridge B1a) and protein L5 of the 50S subunit (bridge B1b), connecting the 2 subunits; these bridges are implicated in subunit movement. Contacts the tRNAs in the A and P-sites.</text>
</comment>
<comment type="subunit">
    <text evidence="1">Part of the 30S ribosomal subunit. Forms a loose heterodimer with protein S19. Forms two bridges to the 50S subunit in the 70S ribosome.</text>
</comment>
<comment type="similarity">
    <text evidence="1">Belongs to the universal ribosomal protein uS13 family.</text>
</comment>
<feature type="chain" id="PRO_1000141265" description="Small ribosomal subunit protein uS13">
    <location>
        <begin position="1"/>
        <end position="118"/>
    </location>
</feature>
<feature type="region of interest" description="Disordered" evidence="2">
    <location>
        <begin position="91"/>
        <end position="118"/>
    </location>
</feature>
<organism>
    <name type="scientific">Francisella tularensis subsp. mediasiatica (strain FSC147)</name>
    <dbReference type="NCBI Taxonomy" id="441952"/>
    <lineage>
        <taxon>Bacteria</taxon>
        <taxon>Pseudomonadati</taxon>
        <taxon>Pseudomonadota</taxon>
        <taxon>Gammaproteobacteria</taxon>
        <taxon>Thiotrichales</taxon>
        <taxon>Francisellaceae</taxon>
        <taxon>Francisella</taxon>
    </lineage>
</organism>
<name>RS13_FRATM</name>
<protein>
    <recommendedName>
        <fullName evidence="1">Small ribosomal subunit protein uS13</fullName>
    </recommendedName>
    <alternativeName>
        <fullName evidence="3">30S ribosomal protein S13</fullName>
    </alternativeName>
</protein>
<keyword id="KW-0687">Ribonucleoprotein</keyword>
<keyword id="KW-0689">Ribosomal protein</keyword>
<keyword id="KW-0694">RNA-binding</keyword>
<keyword id="KW-0699">rRNA-binding</keyword>
<keyword id="KW-0820">tRNA-binding</keyword>
<evidence type="ECO:0000255" key="1">
    <source>
        <dbReference type="HAMAP-Rule" id="MF_01315"/>
    </source>
</evidence>
<evidence type="ECO:0000256" key="2">
    <source>
        <dbReference type="SAM" id="MobiDB-lite"/>
    </source>
</evidence>
<evidence type="ECO:0000305" key="3"/>
<gene>
    <name evidence="1" type="primary">rpsM</name>
    <name type="ordered locus">FTM_1505</name>
</gene>
<accession>B2SDW3</accession>
<proteinExistence type="inferred from homology"/>
<reference key="1">
    <citation type="journal article" date="2009" name="PLoS Pathog.">
        <title>Molecular evolutionary consequences of niche restriction in Francisella tularensis, a facultative intracellular pathogen.</title>
        <authorList>
            <person name="Larsson P."/>
            <person name="Elfsmark D."/>
            <person name="Svensson K."/>
            <person name="Wikstroem P."/>
            <person name="Forsman M."/>
            <person name="Brettin T."/>
            <person name="Keim P."/>
            <person name="Johansson A."/>
        </authorList>
    </citation>
    <scope>NUCLEOTIDE SEQUENCE [LARGE SCALE GENOMIC DNA]</scope>
    <source>
        <strain>FSC147</strain>
    </source>
</reference>